<sequence>MNDSILLGLIGQGLDLSRTPAMHEAEGLAQGRATVYRRIDTLGSRASGQDLKTLLDAALYLGFNGLNITHPYKQAVLPLLDEVSEQATQLGAVNTVVIDANGHTTGHNTDVSGFGRGMEEGLPNAKLDSVVQVGAGGVGNAVAYALVTHGVQKLQVADLDTSRAQALADVINNAVGREAVVGVDARGIEDVIAAADGVVNATPMGMPAHPGTAFDVSCLTKDHWVGDVVYMPIETELLKAARALGCETLDGTRMAIHQAVDAFRLFTGLEPDVSRMRETFLSL</sequence>
<evidence type="ECO:0000250" key="1">
    <source>
        <dbReference type="UniProtKB" id="Q9X5C9"/>
    </source>
</evidence>
<evidence type="ECO:0000255" key="2">
    <source>
        <dbReference type="HAMAP-Rule" id="MF_00222"/>
    </source>
</evidence>
<evidence type="ECO:0000269" key="3">
    <source>
    </source>
</evidence>
<evidence type="ECO:0000303" key="4">
    <source>
    </source>
</evidence>
<proteinExistence type="evidence at transcript level"/>
<name>AROE_CORGB</name>
<feature type="chain" id="PRO_0000351451" description="Quinate/shikimate dehydrogenase (NAD(+))">
    <location>
        <begin position="1"/>
        <end position="283"/>
    </location>
</feature>
<feature type="active site" description="Proton acceptor" evidence="2">
    <location>
        <position position="73"/>
    </location>
</feature>
<feature type="binding site" evidence="1">
    <location>
        <begin position="17"/>
        <end position="19"/>
    </location>
    <ligand>
        <name>L-quinate</name>
        <dbReference type="ChEBI" id="CHEBI:29751"/>
    </ligand>
</feature>
<feature type="binding site" evidence="1">
    <location>
        <position position="17"/>
    </location>
    <ligand>
        <name>shikimate</name>
        <dbReference type="ChEBI" id="CHEBI:36208"/>
    </ligand>
</feature>
<feature type="binding site" evidence="1">
    <location>
        <position position="69"/>
    </location>
    <ligand>
        <name>L-quinate</name>
        <dbReference type="ChEBI" id="CHEBI:29751"/>
    </ligand>
</feature>
<feature type="binding site" evidence="1">
    <location>
        <position position="69"/>
    </location>
    <ligand>
        <name>shikimate</name>
        <dbReference type="ChEBI" id="CHEBI:36208"/>
    </ligand>
</feature>
<feature type="binding site" evidence="1">
    <location>
        <position position="73"/>
    </location>
    <ligand>
        <name>L-quinate</name>
        <dbReference type="ChEBI" id="CHEBI:29751"/>
    </ligand>
</feature>
<feature type="binding site" evidence="1">
    <location>
        <position position="73"/>
    </location>
    <ligand>
        <name>shikimate</name>
        <dbReference type="ChEBI" id="CHEBI:36208"/>
    </ligand>
</feature>
<feature type="binding site" evidence="1">
    <location>
        <position position="94"/>
    </location>
    <ligand>
        <name>L-quinate</name>
        <dbReference type="ChEBI" id="CHEBI:29751"/>
    </ligand>
</feature>
<feature type="binding site" evidence="1">
    <location>
        <position position="94"/>
    </location>
    <ligand>
        <name>shikimate</name>
        <dbReference type="ChEBI" id="CHEBI:36208"/>
    </ligand>
</feature>
<feature type="binding site" evidence="1">
    <location>
        <position position="110"/>
    </location>
    <ligand>
        <name>L-quinate</name>
        <dbReference type="ChEBI" id="CHEBI:29751"/>
    </ligand>
</feature>
<feature type="binding site" evidence="1">
    <location>
        <position position="110"/>
    </location>
    <ligand>
        <name>shikimate</name>
        <dbReference type="ChEBI" id="CHEBI:36208"/>
    </ligand>
</feature>
<feature type="binding site" evidence="2">
    <location>
        <begin position="137"/>
        <end position="138"/>
    </location>
    <ligand>
        <name>NAD(+)</name>
        <dbReference type="ChEBI" id="CHEBI:57540"/>
    </ligand>
</feature>
<feature type="binding site" evidence="1">
    <location>
        <position position="158"/>
    </location>
    <ligand>
        <name>NAD(+)</name>
        <dbReference type="ChEBI" id="CHEBI:57540"/>
    </ligand>
</feature>
<feature type="binding site" evidence="1">
    <location>
        <position position="163"/>
    </location>
    <ligand>
        <name>NAD(+)</name>
        <dbReference type="ChEBI" id="CHEBI:57540"/>
    </ligand>
</feature>
<feature type="binding site" evidence="1">
    <location>
        <begin position="203"/>
        <end position="206"/>
    </location>
    <ligand>
        <name>NAD(+)</name>
        <dbReference type="ChEBI" id="CHEBI:57540"/>
    </ligand>
</feature>
<feature type="binding site" evidence="1">
    <location>
        <position position="213"/>
    </location>
    <ligand>
        <name>NAD(+)</name>
        <dbReference type="ChEBI" id="CHEBI:57540"/>
    </ligand>
</feature>
<feature type="binding site" evidence="2">
    <location>
        <position position="228"/>
    </location>
    <ligand>
        <name>NAD(+)</name>
        <dbReference type="ChEBI" id="CHEBI:57540"/>
    </ligand>
</feature>
<feature type="binding site" evidence="2">
    <location>
        <position position="251"/>
    </location>
    <ligand>
        <name>NAD(+)</name>
        <dbReference type="ChEBI" id="CHEBI:57540"/>
    </ligand>
</feature>
<feature type="binding site" evidence="1">
    <location>
        <position position="258"/>
    </location>
    <ligand>
        <name>L-quinate</name>
        <dbReference type="ChEBI" id="CHEBI:29751"/>
    </ligand>
</feature>
<feature type="binding site" evidence="1">
    <location>
        <position position="258"/>
    </location>
    <ligand>
        <name>shikimate</name>
        <dbReference type="ChEBI" id="CHEBI:36208"/>
    </ligand>
</feature>
<keyword id="KW-0028">Amino-acid biosynthesis</keyword>
<keyword id="KW-0057">Aromatic amino acid biosynthesis</keyword>
<keyword id="KW-0520">NAD</keyword>
<keyword id="KW-0560">Oxidoreductase</keyword>
<gene>
    <name evidence="2" type="primary">aroE</name>
    <name type="ordered locus">cgR_0495</name>
</gene>
<accession>A4QB65</accession>
<comment type="function">
    <text evidence="3">Involved in the biosynthesis of the chorismate, which leads to the biosynthesis of aromatic amino acids, and plays a key role in the quinate degradation pathway. Catalyzes the NAD(+)-dependent oxidation of both quinate and shikimate to 3-dehydroquinate and 3-dehydroshikimate, respectively.</text>
</comment>
<comment type="catalytic activity">
    <reaction evidence="1">
        <text>L-quinate + NAD(+) = 3-dehydroquinate + NADH + H(+)</text>
        <dbReference type="Rhea" id="RHEA:22364"/>
        <dbReference type="ChEBI" id="CHEBI:15378"/>
        <dbReference type="ChEBI" id="CHEBI:29751"/>
        <dbReference type="ChEBI" id="CHEBI:32364"/>
        <dbReference type="ChEBI" id="CHEBI:57540"/>
        <dbReference type="ChEBI" id="CHEBI:57945"/>
        <dbReference type="EC" id="1.1.1.24"/>
    </reaction>
</comment>
<comment type="catalytic activity">
    <reaction evidence="1">
        <text>shikimate + NAD(+) = 3-dehydroshikimate + NADH + H(+)</text>
        <dbReference type="Rhea" id="RHEA:17741"/>
        <dbReference type="ChEBI" id="CHEBI:15378"/>
        <dbReference type="ChEBI" id="CHEBI:16630"/>
        <dbReference type="ChEBI" id="CHEBI:36208"/>
        <dbReference type="ChEBI" id="CHEBI:57540"/>
        <dbReference type="ChEBI" id="CHEBI:57945"/>
    </reaction>
</comment>
<comment type="pathway">
    <text evidence="4">Metabolic intermediate biosynthesis; chorismate biosynthesis; chorismate from D-erythrose 4-phosphate and phosphoenolpyruvate: step 4/7.</text>
</comment>
<comment type="pathway">
    <text evidence="4">Aromatic compound metabolism; 3,4-dihydroxybenzoate biosynthesis; 3-dehydroquinate from D-quinate (NAD(+) route).</text>
</comment>
<comment type="subunit">
    <text evidence="1">Homodimer.</text>
</comment>
<comment type="induction">
    <text evidence="3">By shikimate, quinate and QsuR.</text>
</comment>
<comment type="disruption phenotype">
    <text evidence="3">Cells lacking this gene are unable to grow with quinate and shikimate as substrate but do not affect growth with glucose.</text>
</comment>
<comment type="similarity">
    <text evidence="2">Belongs to the shikimate dehydrogenase family.</text>
</comment>
<reference key="1">
    <citation type="journal article" date="2007" name="Microbiology">
        <title>Comparative analysis of the Corynebacterium glutamicum group and complete genome sequence of strain R.</title>
        <authorList>
            <person name="Yukawa H."/>
            <person name="Omumasaba C.A."/>
            <person name="Nonaka H."/>
            <person name="Kos P."/>
            <person name="Okai N."/>
            <person name="Suzuki N."/>
            <person name="Suda M."/>
            <person name="Tsuge Y."/>
            <person name="Watanabe J."/>
            <person name="Ikeda Y."/>
            <person name="Vertes A.A."/>
            <person name="Inui M."/>
        </authorList>
    </citation>
    <scope>NUCLEOTIDE SEQUENCE [LARGE SCALE GENOMIC DNA]</scope>
    <source>
        <strain>R</strain>
    </source>
</reference>
<reference key="2">
    <citation type="journal article" date="2009" name="Appl. Environ. Microbiol.">
        <title>Regulation of expression of genes involved in quinate and shikimate utilization in Corynebacterium glutamicum.</title>
        <authorList>
            <person name="Teramoto H."/>
            <person name="Inui M."/>
            <person name="Yukawa H."/>
        </authorList>
    </citation>
    <scope>FUNCTION</scope>
    <scope>DISRUPTION PHENOTYPE</scope>
    <scope>INDUCTION</scope>
    <scope>PATHWAY</scope>
    <source>
        <strain>R</strain>
    </source>
</reference>
<dbReference type="EC" id="1.1.1.-" evidence="1"/>
<dbReference type="EC" id="1.1.1.24" evidence="1"/>
<dbReference type="EMBL" id="AP009044">
    <property type="protein sequence ID" value="BAF53462.1"/>
    <property type="molecule type" value="Genomic_DNA"/>
</dbReference>
<dbReference type="RefSeq" id="WP_003860437.1">
    <property type="nucleotide sequence ID" value="NC_009342.1"/>
</dbReference>
<dbReference type="SMR" id="A4QB65"/>
<dbReference type="KEGG" id="cgt:cgR_0495"/>
<dbReference type="HOGENOM" id="CLU_044063_4_3_11"/>
<dbReference type="PhylomeDB" id="A4QB65"/>
<dbReference type="BRENDA" id="1.1.1.25">
    <property type="organism ID" value="960"/>
</dbReference>
<dbReference type="BRENDA" id="1.1.1.282">
    <property type="organism ID" value="960"/>
</dbReference>
<dbReference type="UniPathway" id="UPA00053">
    <property type="reaction ID" value="UER00087"/>
</dbReference>
<dbReference type="Proteomes" id="UP000006698">
    <property type="component" value="Chromosome"/>
</dbReference>
<dbReference type="GO" id="GO:0005829">
    <property type="term" value="C:cytosol"/>
    <property type="evidence" value="ECO:0007669"/>
    <property type="project" value="TreeGrafter"/>
</dbReference>
<dbReference type="GO" id="GO:0070403">
    <property type="term" value="F:NAD+ binding"/>
    <property type="evidence" value="ECO:0000250"/>
    <property type="project" value="UniProtKB"/>
</dbReference>
<dbReference type="GO" id="GO:0050661">
    <property type="term" value="F:NADP binding"/>
    <property type="evidence" value="ECO:0007669"/>
    <property type="project" value="TreeGrafter"/>
</dbReference>
<dbReference type="GO" id="GO:0030266">
    <property type="term" value="F:quinate 3-dehydrogenase (NAD+) activity"/>
    <property type="evidence" value="ECO:0000250"/>
    <property type="project" value="UniProtKB"/>
</dbReference>
<dbReference type="GO" id="GO:0052734">
    <property type="term" value="F:shikimate 3-dehydrogenase (NAD+) activity"/>
    <property type="evidence" value="ECO:0007669"/>
    <property type="project" value="RHEA"/>
</dbReference>
<dbReference type="GO" id="GO:0004764">
    <property type="term" value="F:shikimate 3-dehydrogenase (NADP+) activity"/>
    <property type="evidence" value="ECO:0007669"/>
    <property type="project" value="UniProtKB-UniRule"/>
</dbReference>
<dbReference type="GO" id="GO:0008652">
    <property type="term" value="P:amino acid biosynthetic process"/>
    <property type="evidence" value="ECO:0007669"/>
    <property type="project" value="UniProtKB-KW"/>
</dbReference>
<dbReference type="GO" id="GO:0009073">
    <property type="term" value="P:aromatic amino acid family biosynthetic process"/>
    <property type="evidence" value="ECO:0007669"/>
    <property type="project" value="UniProtKB-KW"/>
</dbReference>
<dbReference type="GO" id="GO:0009423">
    <property type="term" value="P:chorismate biosynthetic process"/>
    <property type="evidence" value="ECO:0000315"/>
    <property type="project" value="UniProtKB"/>
</dbReference>
<dbReference type="GO" id="GO:0019632">
    <property type="term" value="P:shikimate metabolic process"/>
    <property type="evidence" value="ECO:0000315"/>
    <property type="project" value="UniProtKB"/>
</dbReference>
<dbReference type="CDD" id="cd01065">
    <property type="entry name" value="NAD_bind_Shikimate_DH"/>
    <property type="match status" value="1"/>
</dbReference>
<dbReference type="FunFam" id="3.40.50.720:FF:000086">
    <property type="entry name" value="Quinate/shikimate dehydrogenase"/>
    <property type="match status" value="1"/>
</dbReference>
<dbReference type="Gene3D" id="3.40.50.10860">
    <property type="entry name" value="Leucine Dehydrogenase, chain A, domain 1"/>
    <property type="match status" value="1"/>
</dbReference>
<dbReference type="Gene3D" id="3.40.50.720">
    <property type="entry name" value="NAD(P)-binding Rossmann-like Domain"/>
    <property type="match status" value="1"/>
</dbReference>
<dbReference type="HAMAP" id="MF_00222">
    <property type="entry name" value="Shikimate_DH_AroE"/>
    <property type="match status" value="1"/>
</dbReference>
<dbReference type="InterPro" id="IPR046346">
    <property type="entry name" value="Aminoacid_DH-like_N_sf"/>
</dbReference>
<dbReference type="InterPro" id="IPR036291">
    <property type="entry name" value="NAD(P)-bd_dom_sf"/>
</dbReference>
<dbReference type="InterPro" id="IPR041121">
    <property type="entry name" value="SDH_C"/>
</dbReference>
<dbReference type="InterPro" id="IPR013708">
    <property type="entry name" value="Shikimate_DH-bd_N"/>
</dbReference>
<dbReference type="InterPro" id="IPR022893">
    <property type="entry name" value="Shikimate_DH_fam"/>
</dbReference>
<dbReference type="NCBIfam" id="NF009201">
    <property type="entry name" value="PRK12549.1"/>
    <property type="match status" value="1"/>
</dbReference>
<dbReference type="NCBIfam" id="NF010631">
    <property type="entry name" value="PRK14027.1"/>
    <property type="match status" value="1"/>
</dbReference>
<dbReference type="PANTHER" id="PTHR21089:SF1">
    <property type="entry name" value="BIFUNCTIONAL 3-DEHYDROQUINATE DEHYDRATASE_SHIKIMATE DEHYDROGENASE, CHLOROPLASTIC"/>
    <property type="match status" value="1"/>
</dbReference>
<dbReference type="PANTHER" id="PTHR21089">
    <property type="entry name" value="SHIKIMATE DEHYDROGENASE"/>
    <property type="match status" value="1"/>
</dbReference>
<dbReference type="Pfam" id="PF18317">
    <property type="entry name" value="SDH_C"/>
    <property type="match status" value="1"/>
</dbReference>
<dbReference type="Pfam" id="PF08501">
    <property type="entry name" value="Shikimate_dh_N"/>
    <property type="match status" value="1"/>
</dbReference>
<dbReference type="SUPFAM" id="SSF53223">
    <property type="entry name" value="Aminoacid dehydrogenase-like, N-terminal domain"/>
    <property type="match status" value="1"/>
</dbReference>
<dbReference type="SUPFAM" id="SSF51735">
    <property type="entry name" value="NAD(P)-binding Rossmann-fold domains"/>
    <property type="match status" value="1"/>
</dbReference>
<organism>
    <name type="scientific">Corynebacterium glutamicum (strain R)</name>
    <dbReference type="NCBI Taxonomy" id="340322"/>
    <lineage>
        <taxon>Bacteria</taxon>
        <taxon>Bacillati</taxon>
        <taxon>Actinomycetota</taxon>
        <taxon>Actinomycetes</taxon>
        <taxon>Mycobacteriales</taxon>
        <taxon>Corynebacteriaceae</taxon>
        <taxon>Corynebacterium</taxon>
    </lineage>
</organism>
<protein>
    <recommendedName>
        <fullName evidence="4">Quinate/shikimate dehydrogenase (NAD(+))</fullName>
        <shortName evidence="1">QSDH</shortName>
        <ecNumber evidence="1">1.1.1.-</ecNumber>
        <ecNumber evidence="1">1.1.1.24</ecNumber>
    </recommendedName>
</protein>